<gene>
    <name evidence="1" type="primary">kdpA</name>
    <name type="ordered locus">ECA1342</name>
</gene>
<comment type="function">
    <text evidence="1">Part of the high-affinity ATP-driven potassium transport (or Kdp) system, which catalyzes the hydrolysis of ATP coupled with the electrogenic transport of potassium into the cytoplasm. This subunit binds the periplasmic potassium ions and delivers the ions to the membrane domain of KdpB through an intramembrane tunnel.</text>
</comment>
<comment type="subunit">
    <text evidence="1">The system is composed of three essential subunits: KdpA, KdpB and KdpC.</text>
</comment>
<comment type="subcellular location">
    <subcellularLocation>
        <location evidence="1">Cell inner membrane</location>
        <topology evidence="1">Multi-pass membrane protein</topology>
    </subcellularLocation>
</comment>
<comment type="similarity">
    <text evidence="1">Belongs to the KdpA family.</text>
</comment>
<proteinExistence type="inferred from homology"/>
<accession>Q6D7I3</accession>
<reference key="1">
    <citation type="journal article" date="2004" name="Proc. Natl. Acad. Sci. U.S.A.">
        <title>Genome sequence of the enterobacterial phytopathogen Erwinia carotovora subsp. atroseptica and characterization of virulence factors.</title>
        <authorList>
            <person name="Bell K.S."/>
            <person name="Sebaihia M."/>
            <person name="Pritchard L."/>
            <person name="Holden M.T.G."/>
            <person name="Hyman L.J."/>
            <person name="Holeva M.C."/>
            <person name="Thomson N.R."/>
            <person name="Bentley S.D."/>
            <person name="Churcher L.J.C."/>
            <person name="Mungall K."/>
            <person name="Atkin R."/>
            <person name="Bason N."/>
            <person name="Brooks K."/>
            <person name="Chillingworth T."/>
            <person name="Clark K."/>
            <person name="Doggett J."/>
            <person name="Fraser A."/>
            <person name="Hance Z."/>
            <person name="Hauser H."/>
            <person name="Jagels K."/>
            <person name="Moule S."/>
            <person name="Norbertczak H."/>
            <person name="Ormond D."/>
            <person name="Price C."/>
            <person name="Quail M.A."/>
            <person name="Sanders M."/>
            <person name="Walker D."/>
            <person name="Whitehead S."/>
            <person name="Salmond G.P.C."/>
            <person name="Birch P.R.J."/>
            <person name="Parkhill J."/>
            <person name="Toth I.K."/>
        </authorList>
    </citation>
    <scope>NUCLEOTIDE SEQUENCE [LARGE SCALE GENOMIC DNA]</scope>
    <source>
        <strain>SCRI 1043 / ATCC BAA-672</strain>
    </source>
</reference>
<feature type="chain" id="PRO_0000166497" description="Potassium-transporting ATPase potassium-binding subunit">
    <location>
        <begin position="1"/>
        <end position="562"/>
    </location>
</feature>
<feature type="transmembrane region" description="Helical" evidence="1">
    <location>
        <begin position="5"/>
        <end position="25"/>
    </location>
</feature>
<feature type="transmembrane region" description="Helical" evidence="1">
    <location>
        <begin position="63"/>
        <end position="83"/>
    </location>
</feature>
<feature type="transmembrane region" description="Helical" evidence="1">
    <location>
        <begin position="132"/>
        <end position="152"/>
    </location>
</feature>
<feature type="transmembrane region" description="Helical" evidence="1">
    <location>
        <begin position="175"/>
        <end position="195"/>
    </location>
</feature>
<feature type="transmembrane region" description="Helical" evidence="1">
    <location>
        <begin position="250"/>
        <end position="270"/>
    </location>
</feature>
<feature type="transmembrane region" description="Helical" evidence="1">
    <location>
        <begin position="279"/>
        <end position="299"/>
    </location>
</feature>
<feature type="transmembrane region" description="Helical" evidence="1">
    <location>
        <begin position="379"/>
        <end position="399"/>
    </location>
</feature>
<feature type="transmembrane region" description="Helical" evidence="1">
    <location>
        <begin position="416"/>
        <end position="436"/>
    </location>
</feature>
<feature type="transmembrane region" description="Helical" evidence="1">
    <location>
        <begin position="483"/>
        <end position="503"/>
    </location>
</feature>
<feature type="transmembrane region" description="Helical" evidence="1">
    <location>
        <begin position="526"/>
        <end position="546"/>
    </location>
</feature>
<keyword id="KW-0997">Cell inner membrane</keyword>
<keyword id="KW-1003">Cell membrane</keyword>
<keyword id="KW-0406">Ion transport</keyword>
<keyword id="KW-0472">Membrane</keyword>
<keyword id="KW-0630">Potassium</keyword>
<keyword id="KW-0633">Potassium transport</keyword>
<keyword id="KW-1185">Reference proteome</keyword>
<keyword id="KW-0812">Transmembrane</keyword>
<keyword id="KW-1133">Transmembrane helix</keyword>
<keyword id="KW-0813">Transport</keyword>
<protein>
    <recommendedName>
        <fullName evidence="1">Potassium-transporting ATPase potassium-binding subunit</fullName>
    </recommendedName>
    <alternativeName>
        <fullName evidence="1">ATP phosphohydrolase [potassium-transporting] A chain</fullName>
    </alternativeName>
    <alternativeName>
        <fullName evidence="1">Potassium-binding and translocating subunit A</fullName>
    </alternativeName>
    <alternativeName>
        <fullName evidence="1">Potassium-translocating ATPase A chain</fullName>
    </alternativeName>
</protein>
<sequence>MAADAFLLIFGLLLTVLIVAQPLGSGLARLIEGETGTLLQKFETKTARFFALDTTEMRWQQYAAAILALNLIGIVVLFVLLMAQGNLPLNPENMPGLSWHLALNTAVSFVTNTNWQAYSGENTLSYLSQMVGLTVQNFLSAASGIAVAFALIRAFSRRCVDTLGNAWLDLLRITLYVLLPLSLLLALFFVSQGVLQNLLPYQHLTTLDGAAQTLPMGPVASQEAIKLLGTNGGGFFGANSAHPFENPTALSNIVQMLAILLIPTALCFAFGKAVSDKRQGHALLWAMALIFIVAAAVVMKMEVTGNPHLLALGADSAANLEGKETRFGVLTSSLYAVVTTATSTGAVNAMHDSFTALGGMVPLWLMQIGEVVFGGVGSGLYGMLLFVLLTVFIAGLMIGRSPEYLGKKIEVYEMKMTALAILIPPALVLLGTALALSTEAGRGGILNPGAHGFSEVLYAVSSAANNNGSAFAGLSVNTPFYNVLLAVAMLLGRFAVMVPVLAIAGSLVVKKRQPESKGSLSTRSPLFIGMLIAIVLLIGALTFIPALALGPVAEHLQFGLTH</sequence>
<name>KDPA_PECAS</name>
<organism>
    <name type="scientific">Pectobacterium atrosepticum (strain SCRI 1043 / ATCC BAA-672)</name>
    <name type="common">Erwinia carotovora subsp. atroseptica</name>
    <dbReference type="NCBI Taxonomy" id="218491"/>
    <lineage>
        <taxon>Bacteria</taxon>
        <taxon>Pseudomonadati</taxon>
        <taxon>Pseudomonadota</taxon>
        <taxon>Gammaproteobacteria</taxon>
        <taxon>Enterobacterales</taxon>
        <taxon>Pectobacteriaceae</taxon>
        <taxon>Pectobacterium</taxon>
    </lineage>
</organism>
<dbReference type="EMBL" id="BX950851">
    <property type="protein sequence ID" value="CAG74252.1"/>
    <property type="molecule type" value="Genomic_DNA"/>
</dbReference>
<dbReference type="RefSeq" id="WP_011092927.1">
    <property type="nucleotide sequence ID" value="NC_004547.2"/>
</dbReference>
<dbReference type="SMR" id="Q6D7I3"/>
<dbReference type="STRING" id="218491.ECA1342"/>
<dbReference type="GeneID" id="57208157"/>
<dbReference type="KEGG" id="eca:ECA1342"/>
<dbReference type="PATRIC" id="fig|218491.5.peg.1373"/>
<dbReference type="eggNOG" id="COG2060">
    <property type="taxonomic scope" value="Bacteria"/>
</dbReference>
<dbReference type="HOGENOM" id="CLU_018614_3_0_6"/>
<dbReference type="OrthoDB" id="9763796at2"/>
<dbReference type="Proteomes" id="UP000007966">
    <property type="component" value="Chromosome"/>
</dbReference>
<dbReference type="GO" id="GO:0005886">
    <property type="term" value="C:plasma membrane"/>
    <property type="evidence" value="ECO:0007669"/>
    <property type="project" value="UniProtKB-SubCell"/>
</dbReference>
<dbReference type="GO" id="GO:0008556">
    <property type="term" value="F:P-type potassium transmembrane transporter activity"/>
    <property type="evidence" value="ECO:0007669"/>
    <property type="project" value="InterPro"/>
</dbReference>
<dbReference type="GO" id="GO:0030955">
    <property type="term" value="F:potassium ion binding"/>
    <property type="evidence" value="ECO:0007669"/>
    <property type="project" value="UniProtKB-UniRule"/>
</dbReference>
<dbReference type="HAMAP" id="MF_00275">
    <property type="entry name" value="KdpA"/>
    <property type="match status" value="1"/>
</dbReference>
<dbReference type="InterPro" id="IPR004623">
    <property type="entry name" value="KdpA"/>
</dbReference>
<dbReference type="NCBIfam" id="TIGR00680">
    <property type="entry name" value="kdpA"/>
    <property type="match status" value="1"/>
</dbReference>
<dbReference type="PANTHER" id="PTHR30607">
    <property type="entry name" value="POTASSIUM-TRANSPORTING ATPASE A CHAIN"/>
    <property type="match status" value="1"/>
</dbReference>
<dbReference type="PANTHER" id="PTHR30607:SF2">
    <property type="entry name" value="POTASSIUM-TRANSPORTING ATPASE POTASSIUM-BINDING SUBUNIT"/>
    <property type="match status" value="1"/>
</dbReference>
<dbReference type="Pfam" id="PF03814">
    <property type="entry name" value="KdpA"/>
    <property type="match status" value="1"/>
</dbReference>
<dbReference type="PIRSF" id="PIRSF001294">
    <property type="entry name" value="K_ATPaseA"/>
    <property type="match status" value="1"/>
</dbReference>
<evidence type="ECO:0000255" key="1">
    <source>
        <dbReference type="HAMAP-Rule" id="MF_00275"/>
    </source>
</evidence>